<accession>P36430</accession>
<accession>O34465</accession>
<keyword id="KW-0030">Aminoacyl-tRNA synthetase</keyword>
<keyword id="KW-0067">ATP-binding</keyword>
<keyword id="KW-0963">Cytoplasm</keyword>
<keyword id="KW-0436">Ligase</keyword>
<keyword id="KW-0547">Nucleotide-binding</keyword>
<keyword id="KW-0648">Protein biosynthesis</keyword>
<keyword id="KW-1185">Reference proteome</keyword>
<feature type="chain" id="PRO_0000151973" description="Leucine--tRNA ligase">
    <location>
        <begin position="1"/>
        <end position="804"/>
    </location>
</feature>
<feature type="short sequence motif" description="'HIGH' region">
    <location>
        <begin position="40"/>
        <end position="51"/>
    </location>
</feature>
<feature type="short sequence motif" description="'KMSKS' region">
    <location>
        <begin position="576"/>
        <end position="580"/>
    </location>
</feature>
<feature type="binding site" evidence="1">
    <location>
        <position position="579"/>
    </location>
    <ligand>
        <name>ATP</name>
        <dbReference type="ChEBI" id="CHEBI:30616"/>
    </ligand>
</feature>
<feature type="sequence conflict" description="In Ref. 1; AAA22571." evidence="2" ref="1">
    <original>P</original>
    <variation>L</variation>
    <location>
        <position position="186"/>
    </location>
</feature>
<feature type="sequence conflict" description="In Ref. 1; AAA22571." evidence="2" ref="1">
    <original>T</original>
    <variation>N</variation>
    <location>
        <position position="195"/>
    </location>
</feature>
<feature type="sequence conflict" description="In Ref. 1." evidence="2" ref="1">
    <original>RPDTLFGATYTVLAPEHALVENITTAEQKEAVEAY</original>
    <variation>DQIRCLALHTLSLPRNTHWWKTSQRQSKKKLLKLI</variation>
    <location>
        <begin position="247"/>
        <end position="281"/>
    </location>
</feature>
<comment type="catalytic activity">
    <reaction evidence="1">
        <text>tRNA(Leu) + L-leucine + ATP = L-leucyl-tRNA(Leu) + AMP + diphosphate</text>
        <dbReference type="Rhea" id="RHEA:11688"/>
        <dbReference type="Rhea" id="RHEA-COMP:9613"/>
        <dbReference type="Rhea" id="RHEA-COMP:9622"/>
        <dbReference type="ChEBI" id="CHEBI:30616"/>
        <dbReference type="ChEBI" id="CHEBI:33019"/>
        <dbReference type="ChEBI" id="CHEBI:57427"/>
        <dbReference type="ChEBI" id="CHEBI:78442"/>
        <dbReference type="ChEBI" id="CHEBI:78494"/>
        <dbReference type="ChEBI" id="CHEBI:456215"/>
        <dbReference type="EC" id="6.1.1.4"/>
    </reaction>
</comment>
<comment type="subcellular location">
    <subcellularLocation>
        <location evidence="1">Cytoplasm</location>
    </subcellularLocation>
</comment>
<comment type="similarity">
    <text evidence="1">Belongs to the class-I aminoacyl-tRNA synthetase family.</text>
</comment>
<evidence type="ECO:0000255" key="1">
    <source>
        <dbReference type="HAMAP-Rule" id="MF_00049"/>
    </source>
</evidence>
<evidence type="ECO:0000305" key="2"/>
<gene>
    <name evidence="1" type="primary">leuS</name>
    <name type="ordered locus">BSU30320</name>
</gene>
<protein>
    <recommendedName>
        <fullName evidence="1">Leucine--tRNA ligase</fullName>
        <ecNumber evidence="1">6.1.1.4</ecNumber>
    </recommendedName>
    <alternativeName>
        <fullName evidence="1">Leucyl-tRNA synthetase</fullName>
        <shortName evidence="1">LeuRS</shortName>
    </alternativeName>
</protein>
<proteinExistence type="inferred from homology"/>
<reference key="1">
    <citation type="journal article" date="1992" name="J. Bacteriol.">
        <title>Cloning and nucleotide sequence of the leucyl-tRNA synthetase gene of Bacillus subtilis.</title>
        <authorList>
            <person name="Vander Horn P.B."/>
            <person name="Zahler S.A."/>
        </authorList>
    </citation>
    <scope>NUCLEOTIDE SEQUENCE [GENOMIC DNA]</scope>
</reference>
<reference key="2">
    <citation type="journal article" date="1997" name="Microbiology">
        <title>Sequencing and functional annotation of the Bacillus subtilis genes in the 200 kb rrnB-dnaB region.</title>
        <authorList>
            <person name="Lapidus A."/>
            <person name="Galleron N."/>
            <person name="Sorokin A."/>
            <person name="Ehrlich S.D."/>
        </authorList>
    </citation>
    <scope>NUCLEOTIDE SEQUENCE [GENOMIC DNA]</scope>
    <source>
        <strain>168</strain>
    </source>
</reference>
<reference key="3">
    <citation type="journal article" date="1997" name="Nature">
        <title>The complete genome sequence of the Gram-positive bacterium Bacillus subtilis.</title>
        <authorList>
            <person name="Kunst F."/>
            <person name="Ogasawara N."/>
            <person name="Moszer I."/>
            <person name="Albertini A.M."/>
            <person name="Alloni G."/>
            <person name="Azevedo V."/>
            <person name="Bertero M.G."/>
            <person name="Bessieres P."/>
            <person name="Bolotin A."/>
            <person name="Borchert S."/>
            <person name="Borriss R."/>
            <person name="Boursier L."/>
            <person name="Brans A."/>
            <person name="Braun M."/>
            <person name="Brignell S.C."/>
            <person name="Bron S."/>
            <person name="Brouillet S."/>
            <person name="Bruschi C.V."/>
            <person name="Caldwell B."/>
            <person name="Capuano V."/>
            <person name="Carter N.M."/>
            <person name="Choi S.-K."/>
            <person name="Codani J.-J."/>
            <person name="Connerton I.F."/>
            <person name="Cummings N.J."/>
            <person name="Daniel R.A."/>
            <person name="Denizot F."/>
            <person name="Devine K.M."/>
            <person name="Duesterhoeft A."/>
            <person name="Ehrlich S.D."/>
            <person name="Emmerson P.T."/>
            <person name="Entian K.-D."/>
            <person name="Errington J."/>
            <person name="Fabret C."/>
            <person name="Ferrari E."/>
            <person name="Foulger D."/>
            <person name="Fritz C."/>
            <person name="Fujita M."/>
            <person name="Fujita Y."/>
            <person name="Fuma S."/>
            <person name="Galizzi A."/>
            <person name="Galleron N."/>
            <person name="Ghim S.-Y."/>
            <person name="Glaser P."/>
            <person name="Goffeau A."/>
            <person name="Golightly E.J."/>
            <person name="Grandi G."/>
            <person name="Guiseppi G."/>
            <person name="Guy B.J."/>
            <person name="Haga K."/>
            <person name="Haiech J."/>
            <person name="Harwood C.R."/>
            <person name="Henaut A."/>
            <person name="Hilbert H."/>
            <person name="Holsappel S."/>
            <person name="Hosono S."/>
            <person name="Hullo M.-F."/>
            <person name="Itaya M."/>
            <person name="Jones L.-M."/>
            <person name="Joris B."/>
            <person name="Karamata D."/>
            <person name="Kasahara Y."/>
            <person name="Klaerr-Blanchard M."/>
            <person name="Klein C."/>
            <person name="Kobayashi Y."/>
            <person name="Koetter P."/>
            <person name="Koningstein G."/>
            <person name="Krogh S."/>
            <person name="Kumano M."/>
            <person name="Kurita K."/>
            <person name="Lapidus A."/>
            <person name="Lardinois S."/>
            <person name="Lauber J."/>
            <person name="Lazarevic V."/>
            <person name="Lee S.-M."/>
            <person name="Levine A."/>
            <person name="Liu H."/>
            <person name="Masuda S."/>
            <person name="Mauel C."/>
            <person name="Medigue C."/>
            <person name="Medina N."/>
            <person name="Mellado R.P."/>
            <person name="Mizuno M."/>
            <person name="Moestl D."/>
            <person name="Nakai S."/>
            <person name="Noback M."/>
            <person name="Noone D."/>
            <person name="O'Reilly M."/>
            <person name="Ogawa K."/>
            <person name="Ogiwara A."/>
            <person name="Oudega B."/>
            <person name="Park S.-H."/>
            <person name="Parro V."/>
            <person name="Pohl T.M."/>
            <person name="Portetelle D."/>
            <person name="Porwollik S."/>
            <person name="Prescott A.M."/>
            <person name="Presecan E."/>
            <person name="Pujic P."/>
            <person name="Purnelle B."/>
            <person name="Rapoport G."/>
            <person name="Rey M."/>
            <person name="Reynolds S."/>
            <person name="Rieger M."/>
            <person name="Rivolta C."/>
            <person name="Rocha E."/>
            <person name="Roche B."/>
            <person name="Rose M."/>
            <person name="Sadaie Y."/>
            <person name="Sato T."/>
            <person name="Scanlan E."/>
            <person name="Schleich S."/>
            <person name="Schroeter R."/>
            <person name="Scoffone F."/>
            <person name="Sekiguchi J."/>
            <person name="Sekowska A."/>
            <person name="Seror S.J."/>
            <person name="Serror P."/>
            <person name="Shin B.-S."/>
            <person name="Soldo B."/>
            <person name="Sorokin A."/>
            <person name="Tacconi E."/>
            <person name="Takagi T."/>
            <person name="Takahashi H."/>
            <person name="Takemaru K."/>
            <person name="Takeuchi M."/>
            <person name="Tamakoshi A."/>
            <person name="Tanaka T."/>
            <person name="Terpstra P."/>
            <person name="Tognoni A."/>
            <person name="Tosato V."/>
            <person name="Uchiyama S."/>
            <person name="Vandenbol M."/>
            <person name="Vannier F."/>
            <person name="Vassarotti A."/>
            <person name="Viari A."/>
            <person name="Wambutt R."/>
            <person name="Wedler E."/>
            <person name="Wedler H."/>
            <person name="Weitzenegger T."/>
            <person name="Winters P."/>
            <person name="Wipat A."/>
            <person name="Yamamoto H."/>
            <person name="Yamane K."/>
            <person name="Yasumoto K."/>
            <person name="Yata K."/>
            <person name="Yoshida K."/>
            <person name="Yoshikawa H.-F."/>
            <person name="Zumstein E."/>
            <person name="Yoshikawa H."/>
            <person name="Danchin A."/>
        </authorList>
    </citation>
    <scope>NUCLEOTIDE SEQUENCE [LARGE SCALE GENOMIC DNA]</scope>
    <source>
        <strain>168</strain>
    </source>
</reference>
<sequence length="804" mass="91543">MSFQHKEIEKKWQTYWLENKTFATLDNNEKQKFYALDMFPYPSGAGLHVGHPEGYTATDILSRMKRMQGYDVLHPMGWDAFGLPAEQYALDTGNDPAVFTKQNIDNFRRQIQALGFSYDWDREINTTDPEYYKWTQWIFLKLYEKGLAYVDEVPVNWCPALGTVLANEEVIDGKSERGGHPVERRPMKQWMLKITAYADRLLEDLEELDWPESIKDMQRNWIGRSEGAHVHFAIDGHDDSFTVFTTRPDTLFGATYTVLAPEHALVENITTAEQKEAVEAYIKEIQSKSDLERTDLAKTKTGVFTGAYAINPVNGEKLPIWIADYVLASYGTGAVMAVPGHDERDFEFAKTFGLPVKEVVKGGNVEEAAYTGDGEHVNSDFLNGLHKQEAIEKVIAWLEETKNGEKKVTYRLRDWLFSRQRYWGEPIPVIHWEDGTSTAVPEEELPLILPKTDEIKPSGTGESPLANIKEWVEVTDPETGKKGRRETNTMPQWAGSCWYFLRYIDPHNPDQLASPEKLEKWLPVDMYIGGAEHAVLHLLYARFWHKFLYDIGVVPTKEPFQKLYNQGMILGENNEKMSKSKGNVVNPDEIVASHGADTLRLYEMFMGPLDASIAWSESGLDGARRFLDRVWRLFIEDSGELNGKIVEGAGETLERVYHETVMKVTDHYEGLRFNTGISQLMVFINEAYKATELPKEYMEGFVKLLSPVAPHLAEELWEKLGHSGTIAYEAWPVYDETKLVDDEVEIVVQLNGKVKAKLQVPADATKEQLEQLAQADEKVKEQLEGKTIRKIIAVPGKLVNIVAN</sequence>
<dbReference type="EC" id="6.1.1.4" evidence="1"/>
<dbReference type="EMBL" id="M88581">
    <property type="protein sequence ID" value="AAA22571.1"/>
    <property type="molecule type" value="Genomic_DNA"/>
</dbReference>
<dbReference type="EMBL" id="AF008220">
    <property type="protein sequence ID" value="AAC00259.1"/>
    <property type="molecule type" value="Genomic_DNA"/>
</dbReference>
<dbReference type="EMBL" id="AL009126">
    <property type="protein sequence ID" value="CAB15010.1"/>
    <property type="molecule type" value="Genomic_DNA"/>
</dbReference>
<dbReference type="PIR" id="D69650">
    <property type="entry name" value="D69650"/>
</dbReference>
<dbReference type="RefSeq" id="NP_390910.1">
    <property type="nucleotide sequence ID" value="NC_000964.3"/>
</dbReference>
<dbReference type="RefSeq" id="WP_003246072.1">
    <property type="nucleotide sequence ID" value="NZ_OZ025638.1"/>
</dbReference>
<dbReference type="SMR" id="P36430"/>
<dbReference type="FunCoup" id="P36430">
    <property type="interactions" value="862"/>
</dbReference>
<dbReference type="IntAct" id="P36430">
    <property type="interactions" value="1"/>
</dbReference>
<dbReference type="MINT" id="P36430"/>
<dbReference type="STRING" id="224308.BSU30320"/>
<dbReference type="jPOST" id="P36430"/>
<dbReference type="PaxDb" id="224308-BSU30320"/>
<dbReference type="EnsemblBacteria" id="CAB15010">
    <property type="protein sequence ID" value="CAB15010"/>
    <property type="gene ID" value="BSU_30320"/>
</dbReference>
<dbReference type="GeneID" id="938102"/>
<dbReference type="KEGG" id="bsu:BSU30320"/>
<dbReference type="PATRIC" id="fig|224308.179.peg.3288"/>
<dbReference type="eggNOG" id="COG0495">
    <property type="taxonomic scope" value="Bacteria"/>
</dbReference>
<dbReference type="InParanoid" id="P36430"/>
<dbReference type="OrthoDB" id="9810365at2"/>
<dbReference type="PhylomeDB" id="P36430"/>
<dbReference type="BioCyc" id="BSUB:BSU30320-MONOMER"/>
<dbReference type="Proteomes" id="UP000001570">
    <property type="component" value="Chromosome"/>
</dbReference>
<dbReference type="GO" id="GO:0005829">
    <property type="term" value="C:cytosol"/>
    <property type="evidence" value="ECO:0000318"/>
    <property type="project" value="GO_Central"/>
</dbReference>
<dbReference type="GO" id="GO:0002161">
    <property type="term" value="F:aminoacyl-tRNA deacylase activity"/>
    <property type="evidence" value="ECO:0007669"/>
    <property type="project" value="InterPro"/>
</dbReference>
<dbReference type="GO" id="GO:0005524">
    <property type="term" value="F:ATP binding"/>
    <property type="evidence" value="ECO:0007669"/>
    <property type="project" value="UniProtKB-UniRule"/>
</dbReference>
<dbReference type="GO" id="GO:0004823">
    <property type="term" value="F:leucine-tRNA ligase activity"/>
    <property type="evidence" value="ECO:0000318"/>
    <property type="project" value="GO_Central"/>
</dbReference>
<dbReference type="GO" id="GO:0006429">
    <property type="term" value="P:leucyl-tRNA aminoacylation"/>
    <property type="evidence" value="ECO:0000318"/>
    <property type="project" value="GO_Central"/>
</dbReference>
<dbReference type="CDD" id="cd07958">
    <property type="entry name" value="Anticodon_Ia_Leu_BEm"/>
    <property type="match status" value="1"/>
</dbReference>
<dbReference type="CDD" id="cd00812">
    <property type="entry name" value="LeuRS_core"/>
    <property type="match status" value="1"/>
</dbReference>
<dbReference type="FunFam" id="1.10.730.10:FF:000012">
    <property type="entry name" value="Leucine--tRNA ligase"/>
    <property type="match status" value="1"/>
</dbReference>
<dbReference type="FunFam" id="3.10.20.590:FF:000001">
    <property type="entry name" value="Leucine--tRNA ligase"/>
    <property type="match status" value="1"/>
</dbReference>
<dbReference type="FunFam" id="3.40.50.620:FF:000056">
    <property type="entry name" value="Leucine--tRNA ligase"/>
    <property type="match status" value="1"/>
</dbReference>
<dbReference type="FunFam" id="3.40.50.620:FF:000077">
    <property type="entry name" value="Leucine--tRNA ligase"/>
    <property type="match status" value="1"/>
</dbReference>
<dbReference type="FunFam" id="3.90.740.10:FF:000017">
    <property type="entry name" value="Leucine--tRNA ligase"/>
    <property type="match status" value="1"/>
</dbReference>
<dbReference type="FunFam" id="1.10.730.10:FF:000011">
    <property type="entry name" value="Leucine--tRNA ligase chloroplastic/mitochondrial"/>
    <property type="match status" value="1"/>
</dbReference>
<dbReference type="Gene3D" id="3.10.20.590">
    <property type="match status" value="1"/>
</dbReference>
<dbReference type="Gene3D" id="3.40.50.620">
    <property type="entry name" value="HUPs"/>
    <property type="match status" value="2"/>
</dbReference>
<dbReference type="Gene3D" id="1.10.730.10">
    <property type="entry name" value="Isoleucyl-tRNA Synthetase, Domain 1"/>
    <property type="match status" value="1"/>
</dbReference>
<dbReference type="Gene3D" id="3.90.740.10">
    <property type="entry name" value="Valyl/Leucyl/Isoleucyl-tRNA synthetase, editing domain"/>
    <property type="match status" value="1"/>
</dbReference>
<dbReference type="HAMAP" id="MF_00049_B">
    <property type="entry name" value="Leu_tRNA_synth_B"/>
    <property type="match status" value="1"/>
</dbReference>
<dbReference type="InterPro" id="IPR001412">
    <property type="entry name" value="aa-tRNA-synth_I_CS"/>
</dbReference>
<dbReference type="InterPro" id="IPR002300">
    <property type="entry name" value="aa-tRNA-synth_Ia"/>
</dbReference>
<dbReference type="InterPro" id="IPR002302">
    <property type="entry name" value="Leu-tRNA-ligase"/>
</dbReference>
<dbReference type="InterPro" id="IPR025709">
    <property type="entry name" value="Leu_tRNA-synth_edit"/>
</dbReference>
<dbReference type="InterPro" id="IPR013155">
    <property type="entry name" value="M/V/L/I-tRNA-synth_anticd-bd"/>
</dbReference>
<dbReference type="InterPro" id="IPR015413">
    <property type="entry name" value="Methionyl/Leucyl_tRNA_Synth"/>
</dbReference>
<dbReference type="InterPro" id="IPR014729">
    <property type="entry name" value="Rossmann-like_a/b/a_fold"/>
</dbReference>
<dbReference type="InterPro" id="IPR009080">
    <property type="entry name" value="tRNAsynth_Ia_anticodon-bd"/>
</dbReference>
<dbReference type="InterPro" id="IPR009008">
    <property type="entry name" value="Val/Leu/Ile-tRNA-synth_edit"/>
</dbReference>
<dbReference type="NCBIfam" id="TIGR00396">
    <property type="entry name" value="leuS_bact"/>
    <property type="match status" value="1"/>
</dbReference>
<dbReference type="PANTHER" id="PTHR43740:SF2">
    <property type="entry name" value="LEUCINE--TRNA LIGASE, MITOCHONDRIAL"/>
    <property type="match status" value="1"/>
</dbReference>
<dbReference type="PANTHER" id="PTHR43740">
    <property type="entry name" value="LEUCYL-TRNA SYNTHETASE"/>
    <property type="match status" value="1"/>
</dbReference>
<dbReference type="Pfam" id="PF08264">
    <property type="entry name" value="Anticodon_1"/>
    <property type="match status" value="1"/>
</dbReference>
<dbReference type="Pfam" id="PF00133">
    <property type="entry name" value="tRNA-synt_1"/>
    <property type="match status" value="1"/>
</dbReference>
<dbReference type="Pfam" id="PF13603">
    <property type="entry name" value="tRNA-synt_1_2"/>
    <property type="match status" value="1"/>
</dbReference>
<dbReference type="Pfam" id="PF09334">
    <property type="entry name" value="tRNA-synt_1g"/>
    <property type="match status" value="1"/>
</dbReference>
<dbReference type="PRINTS" id="PR00985">
    <property type="entry name" value="TRNASYNTHLEU"/>
</dbReference>
<dbReference type="SUPFAM" id="SSF47323">
    <property type="entry name" value="Anticodon-binding domain of a subclass of class I aminoacyl-tRNA synthetases"/>
    <property type="match status" value="1"/>
</dbReference>
<dbReference type="SUPFAM" id="SSF52374">
    <property type="entry name" value="Nucleotidylyl transferase"/>
    <property type="match status" value="1"/>
</dbReference>
<dbReference type="SUPFAM" id="SSF50677">
    <property type="entry name" value="ValRS/IleRS/LeuRS editing domain"/>
    <property type="match status" value="1"/>
</dbReference>
<dbReference type="PROSITE" id="PS00178">
    <property type="entry name" value="AA_TRNA_LIGASE_I"/>
    <property type="match status" value="1"/>
</dbReference>
<name>SYL_BACSU</name>
<organism>
    <name type="scientific">Bacillus subtilis (strain 168)</name>
    <dbReference type="NCBI Taxonomy" id="224308"/>
    <lineage>
        <taxon>Bacteria</taxon>
        <taxon>Bacillati</taxon>
        <taxon>Bacillota</taxon>
        <taxon>Bacilli</taxon>
        <taxon>Bacillales</taxon>
        <taxon>Bacillaceae</taxon>
        <taxon>Bacillus</taxon>
    </lineage>
</organism>